<gene>
    <name type="primary">new9</name>
    <name type="ORF">SPAC926.10</name>
</gene>
<feature type="chain" id="PRO_0000416505" description="Uncharacterized protein new9">
    <location>
        <begin position="1"/>
        <end position="57"/>
    </location>
</feature>
<feature type="transmembrane region" description="Helical" evidence="1">
    <location>
        <begin position="10"/>
        <end position="27"/>
    </location>
</feature>
<feature type="coiled-coil region" evidence="1">
    <location>
        <begin position="28"/>
        <end position="55"/>
    </location>
</feature>
<protein>
    <recommendedName>
        <fullName>Uncharacterized protein new9</fullName>
    </recommendedName>
</protein>
<comment type="subcellular location">
    <subcellularLocation>
        <location evidence="2">Membrane</location>
        <topology evidence="2">Single-pass membrane protein</topology>
    </subcellularLocation>
</comment>
<proteinExistence type="evidence at transcript level"/>
<name>NEW9_SCHPO</name>
<sequence length="57" mass="6799">MLRWSSTYTFGLLWLIIGSEAFHLNALKQDHLERMKQYDAKIRLAKHEFDDTSNETK</sequence>
<keyword id="KW-0175">Coiled coil</keyword>
<keyword id="KW-0472">Membrane</keyword>
<keyword id="KW-1185">Reference proteome</keyword>
<keyword id="KW-0812">Transmembrane</keyword>
<keyword id="KW-1133">Transmembrane helix</keyword>
<dbReference type="EMBL" id="CU329670">
    <property type="protein sequence ID" value="CCD31334.1"/>
    <property type="molecule type" value="Genomic_DNA"/>
</dbReference>
<dbReference type="RefSeq" id="XP_004001789.1">
    <property type="nucleotide sequence ID" value="XM_004001740.1"/>
</dbReference>
<dbReference type="SMR" id="G2TRN2"/>
<dbReference type="PaxDb" id="4896-SPAC926.10.1"/>
<dbReference type="EnsemblFungi" id="SPAC926.10.1">
    <property type="protein sequence ID" value="SPAC926.10.1:pep"/>
    <property type="gene ID" value="SPAC926.10"/>
</dbReference>
<dbReference type="PomBase" id="SPAC926.10">
    <property type="gene designation" value="new9"/>
</dbReference>
<dbReference type="VEuPathDB" id="FungiDB:SPAC926.10"/>
<dbReference type="HOGENOM" id="CLU_2997752_0_0_1"/>
<dbReference type="InParanoid" id="G2TRN2"/>
<dbReference type="PRO" id="PR:G2TRN2"/>
<dbReference type="Proteomes" id="UP000002485">
    <property type="component" value="Chromosome I"/>
</dbReference>
<dbReference type="GO" id="GO:1990524">
    <property type="term" value="C:INA complex"/>
    <property type="evidence" value="ECO:0000266"/>
    <property type="project" value="PomBase"/>
</dbReference>
<dbReference type="GO" id="GO:0033615">
    <property type="term" value="P:mitochondrial proton-transporting ATP synthase complex assembly"/>
    <property type="evidence" value="ECO:0000266"/>
    <property type="project" value="PomBase"/>
</dbReference>
<organism>
    <name type="scientific">Schizosaccharomyces pombe (strain 972 / ATCC 24843)</name>
    <name type="common">Fission yeast</name>
    <dbReference type="NCBI Taxonomy" id="284812"/>
    <lineage>
        <taxon>Eukaryota</taxon>
        <taxon>Fungi</taxon>
        <taxon>Dikarya</taxon>
        <taxon>Ascomycota</taxon>
        <taxon>Taphrinomycotina</taxon>
        <taxon>Schizosaccharomycetes</taxon>
        <taxon>Schizosaccharomycetales</taxon>
        <taxon>Schizosaccharomycetaceae</taxon>
        <taxon>Schizosaccharomyces</taxon>
    </lineage>
</organism>
<accession>G2TRN2</accession>
<evidence type="ECO:0000255" key="1"/>
<evidence type="ECO:0000305" key="2"/>
<reference key="1">
    <citation type="journal article" date="2002" name="Nature">
        <title>The genome sequence of Schizosaccharomyces pombe.</title>
        <authorList>
            <person name="Wood V."/>
            <person name="Gwilliam R."/>
            <person name="Rajandream M.A."/>
            <person name="Lyne M.H."/>
            <person name="Lyne R."/>
            <person name="Stewart A."/>
            <person name="Sgouros J.G."/>
            <person name="Peat N."/>
            <person name="Hayles J."/>
            <person name="Baker S.G."/>
            <person name="Basham D."/>
            <person name="Bowman S."/>
            <person name="Brooks K."/>
            <person name="Brown D."/>
            <person name="Brown S."/>
            <person name="Chillingworth T."/>
            <person name="Churcher C.M."/>
            <person name="Collins M."/>
            <person name="Connor R."/>
            <person name="Cronin A."/>
            <person name="Davis P."/>
            <person name="Feltwell T."/>
            <person name="Fraser A."/>
            <person name="Gentles S."/>
            <person name="Goble A."/>
            <person name="Hamlin N."/>
            <person name="Harris D.E."/>
            <person name="Hidalgo J."/>
            <person name="Hodgson G."/>
            <person name="Holroyd S."/>
            <person name="Hornsby T."/>
            <person name="Howarth S."/>
            <person name="Huckle E.J."/>
            <person name="Hunt S."/>
            <person name="Jagels K."/>
            <person name="James K.D."/>
            <person name="Jones L."/>
            <person name="Jones M."/>
            <person name="Leather S."/>
            <person name="McDonald S."/>
            <person name="McLean J."/>
            <person name="Mooney P."/>
            <person name="Moule S."/>
            <person name="Mungall K.L."/>
            <person name="Murphy L.D."/>
            <person name="Niblett D."/>
            <person name="Odell C."/>
            <person name="Oliver K."/>
            <person name="O'Neil S."/>
            <person name="Pearson D."/>
            <person name="Quail M.A."/>
            <person name="Rabbinowitsch E."/>
            <person name="Rutherford K.M."/>
            <person name="Rutter S."/>
            <person name="Saunders D."/>
            <person name="Seeger K."/>
            <person name="Sharp S."/>
            <person name="Skelton J."/>
            <person name="Simmonds M.N."/>
            <person name="Squares R."/>
            <person name="Squares S."/>
            <person name="Stevens K."/>
            <person name="Taylor K."/>
            <person name="Taylor R.G."/>
            <person name="Tivey A."/>
            <person name="Walsh S.V."/>
            <person name="Warren T."/>
            <person name="Whitehead S."/>
            <person name="Woodward J.R."/>
            <person name="Volckaert G."/>
            <person name="Aert R."/>
            <person name="Robben J."/>
            <person name="Grymonprez B."/>
            <person name="Weltjens I."/>
            <person name="Vanstreels E."/>
            <person name="Rieger M."/>
            <person name="Schaefer M."/>
            <person name="Mueller-Auer S."/>
            <person name="Gabel C."/>
            <person name="Fuchs M."/>
            <person name="Duesterhoeft A."/>
            <person name="Fritzc C."/>
            <person name="Holzer E."/>
            <person name="Moestl D."/>
            <person name="Hilbert H."/>
            <person name="Borzym K."/>
            <person name="Langer I."/>
            <person name="Beck A."/>
            <person name="Lehrach H."/>
            <person name="Reinhardt R."/>
            <person name="Pohl T.M."/>
            <person name="Eger P."/>
            <person name="Zimmermann W."/>
            <person name="Wedler H."/>
            <person name="Wambutt R."/>
            <person name="Purnelle B."/>
            <person name="Goffeau A."/>
            <person name="Cadieu E."/>
            <person name="Dreano S."/>
            <person name="Gloux S."/>
            <person name="Lelaure V."/>
            <person name="Mottier S."/>
            <person name="Galibert F."/>
            <person name="Aves S.J."/>
            <person name="Xiang Z."/>
            <person name="Hunt C."/>
            <person name="Moore K."/>
            <person name="Hurst S.M."/>
            <person name="Lucas M."/>
            <person name="Rochet M."/>
            <person name="Gaillardin C."/>
            <person name="Tallada V.A."/>
            <person name="Garzon A."/>
            <person name="Thode G."/>
            <person name="Daga R.R."/>
            <person name="Cruzado L."/>
            <person name="Jimenez J."/>
            <person name="Sanchez M."/>
            <person name="del Rey F."/>
            <person name="Benito J."/>
            <person name="Dominguez A."/>
            <person name="Revuelta J.L."/>
            <person name="Moreno S."/>
            <person name="Armstrong J."/>
            <person name="Forsburg S.L."/>
            <person name="Cerutti L."/>
            <person name="Lowe T."/>
            <person name="McCombie W.R."/>
            <person name="Paulsen I."/>
            <person name="Potashkin J."/>
            <person name="Shpakovski G.V."/>
            <person name="Ussery D."/>
            <person name="Barrell B.G."/>
            <person name="Nurse P."/>
        </authorList>
    </citation>
    <scope>NUCLEOTIDE SEQUENCE [LARGE SCALE GENOMIC DNA]</scope>
    <source>
        <strain>972 / ATCC 24843</strain>
    </source>
</reference>
<reference key="2">
    <citation type="journal article" date="2011" name="Genetics">
        <title>Augmented annotation of the Schizosaccharomyces pombe genome reveals additional genes required for growth and viability.</title>
        <authorList>
            <person name="Bitton D.A."/>
            <person name="Wood V."/>
            <person name="Scutt P.J."/>
            <person name="Grallert A."/>
            <person name="Yates T."/>
            <person name="Smith D.L."/>
            <person name="Hagan I.M."/>
            <person name="Miller C.J."/>
        </authorList>
    </citation>
    <scope>IDENTIFICATION</scope>
</reference>